<dbReference type="EMBL" id="AY665713">
    <property type="protein sequence ID" value="AAT67311.1"/>
    <property type="molecule type" value="Genomic_DNA"/>
</dbReference>
<dbReference type="PIR" id="I36800">
    <property type="entry name" value="WZBEE6"/>
</dbReference>
<dbReference type="Proteomes" id="UP000001189">
    <property type="component" value="Segment"/>
</dbReference>
<dbReference type="GO" id="GO:0042025">
    <property type="term" value="C:host cell nucleus"/>
    <property type="evidence" value="ECO:0007669"/>
    <property type="project" value="UniProtKB-SubCell"/>
</dbReference>
<dbReference type="GO" id="GO:0006260">
    <property type="term" value="P:DNA replication"/>
    <property type="evidence" value="ECO:0007669"/>
    <property type="project" value="UniProtKB-KW"/>
</dbReference>
<dbReference type="GO" id="GO:0019079">
    <property type="term" value="P:viral genome replication"/>
    <property type="evidence" value="ECO:0007669"/>
    <property type="project" value="InterPro"/>
</dbReference>
<dbReference type="HAMAP" id="MF_04010">
    <property type="entry name" value="HSV_HEPA"/>
    <property type="match status" value="1"/>
</dbReference>
<dbReference type="InterPro" id="IPR004996">
    <property type="entry name" value="HSV_HEPA"/>
</dbReference>
<dbReference type="Pfam" id="PF03324">
    <property type="entry name" value="Herpes_HEPA"/>
    <property type="match status" value="1"/>
</dbReference>
<protein>
    <recommendedName>
        <fullName evidence="1">DNA helicase/primase complex-associated protein</fullName>
        <shortName evidence="1">HEPA</shortName>
    </recommendedName>
    <alternativeName>
        <fullName evidence="1">Primase-associated factor</fullName>
    </alternativeName>
</protein>
<name>HEPA_EHV1B</name>
<proteinExistence type="inferred from homology"/>
<comment type="function">
    <text evidence="1">Component of the helicase/primase complex. Unwinds the DNA at the replication forks and generates single-stranded DNA for both leading and lagging strand synthesis. The primase synthesizes short RNA primers on the lagging strand that the polymerase presumably elongates using dNTPs. The primase-associated factor has no known catalytic activity in the complex and may serve to facilitate the formation of the replisome by directly interacting with the origin-binding protein and the polymerase.</text>
</comment>
<comment type="subunit">
    <text evidence="1">Associates with the primase and the helicase to form the helicase-primase complex. Interacts with the origin-binding protein. Interacts with the polymerase catalytic subunit.</text>
</comment>
<comment type="subcellular location">
    <subcellularLocation>
        <location evidence="1">Host nucleus</location>
    </subcellularLocation>
</comment>
<comment type="similarity">
    <text evidence="1">Belongs to the herpesviridae HEPA family.</text>
</comment>
<feature type="chain" id="PRO_0000115859" description="DNA helicase/primase complex-associated protein">
    <location>
        <begin position="1"/>
        <end position="716"/>
    </location>
</feature>
<keyword id="KW-0235">DNA replication</keyword>
<keyword id="KW-1048">Host nucleus</keyword>
<keyword id="KW-1185">Reference proteome</keyword>
<accession>P28946</accession>
<accession>Q6DLF7</accession>
<gene>
    <name type="ordered locus">54</name>
</gene>
<reference key="1">
    <citation type="journal article" date="1992" name="Virology">
        <title>The DNA sequence of equine herpesvirus-1.</title>
        <authorList>
            <person name="Telford E.A.R."/>
            <person name="Watson M.S."/>
            <person name="McBride K."/>
            <person name="Davison A.J."/>
        </authorList>
    </citation>
    <scope>NUCLEOTIDE SEQUENCE [LARGE SCALE GENOMIC DNA]</scope>
</reference>
<evidence type="ECO:0000255" key="1">
    <source>
        <dbReference type="HAMAP-Rule" id="MF_04010"/>
    </source>
</evidence>
<organismHost>
    <name type="scientific">Equus caballus</name>
    <name type="common">Horse</name>
    <dbReference type="NCBI Taxonomy" id="9796"/>
</organismHost>
<organism>
    <name type="scientific">Equine herpesvirus 1 (strain Ab4p)</name>
    <name type="common">EHV-1</name>
    <name type="synonym">Equine abortion virus</name>
    <dbReference type="NCBI Taxonomy" id="31520"/>
    <lineage>
        <taxon>Viruses</taxon>
        <taxon>Duplodnaviria</taxon>
        <taxon>Heunggongvirae</taxon>
        <taxon>Peploviricota</taxon>
        <taxon>Herviviricetes</taxon>
        <taxon>Herpesvirales</taxon>
        <taxon>Orthoherpesviridae</taxon>
        <taxon>Alphaherpesvirinae</taxon>
        <taxon>Varicellovirus</taxon>
        <taxon>Varicellovirus equidalpha1</taxon>
        <taxon>Equid alphaherpesvirus 1</taxon>
    </lineage>
</organism>
<sequence length="716" mass="77773">MLCRRGSDYTAEFCHVPVSGELLKRGARDASLVTPARVASAAQTAAVPGCWPLAPLGNAMLWKSVYGGITAALKRAVGSFAFYQPLVLGINTQTGLLVTLRPAASAGEGGGDHVSPRAAIVNVSVEVDLDPAGIEASAASSTGSSLARARLCTLRDGYFLSKRDIALEVEIATKEVSFYRKYDSVQQPANKRRGDMADLFVVHERTLLLGGCKRMGVKVLLPRTFDCLVASSQSVSGLAAMALYKQWHATLFSVELPDTVVQIFAYLGPELNPCGEEVDYCCFVGFPGLPTLKASSSTTEAVRDAMAAYRLSDGLWPALGMSAFHFLAPWDPEDRWPGESEAKRVEGAVHRLQLGTEDDWGAGRVSCILESDAVMQGPWFAKFDFSAFFPTLYLLLFPANERLAEVVRLRARGQHPTLKLALVSFFGGLQHINPVAYRSIIALSNGISKRLEHEVNQRGFAICTYVKDGFWGAAGNLPSDSVSYADALVYAEELRSAAQKAALGHVSEMGFSLPEGVHLNLRLEGLFTDAISWSTHCYWLYNRFTKMEDFVGFPAKSGAGRAAKASLSALLPLVAAVCDSSDMSTLHQSVRGACEQLVAGAFAERNNPQFWSTRTGIESSTLLPPAVYRNGSLLDRDCGQREIVLTRKHDCESPSPVPWTLFPPPLVLGRIDCMVYLTSIFKTYLSMLNRAISASCDADESMNVDFPISDYAFLFT</sequence>